<reference key="1">
    <citation type="journal article" date="2006" name="Proc. Natl. Acad. Sci. U.S.A.">
        <title>Genome reduction in Leptospira borgpetersenii reflects limited transmission potential.</title>
        <authorList>
            <person name="Bulach D.M."/>
            <person name="Zuerner R.L."/>
            <person name="Wilson P."/>
            <person name="Seemann T."/>
            <person name="McGrath A."/>
            <person name="Cullen P.A."/>
            <person name="Davis J."/>
            <person name="Johnson M."/>
            <person name="Kuczek E."/>
            <person name="Alt D.P."/>
            <person name="Peterson-Burch B."/>
            <person name="Coppel R.L."/>
            <person name="Rood J.I."/>
            <person name="Davies J.K."/>
            <person name="Adler B."/>
        </authorList>
    </citation>
    <scope>NUCLEOTIDE SEQUENCE [LARGE SCALE GENOMIC DNA]</scope>
    <source>
        <strain>L550</strain>
    </source>
</reference>
<gene>
    <name evidence="1" type="primary">mutS</name>
    <name type="ordered locus">LBL_1417</name>
</gene>
<name>MUTS_LEPBL</name>
<evidence type="ECO:0000255" key="1">
    <source>
        <dbReference type="HAMAP-Rule" id="MF_00096"/>
    </source>
</evidence>
<accession>Q051T9</accession>
<keyword id="KW-0067">ATP-binding</keyword>
<keyword id="KW-0227">DNA damage</keyword>
<keyword id="KW-0234">DNA repair</keyword>
<keyword id="KW-0238">DNA-binding</keyword>
<keyword id="KW-0547">Nucleotide-binding</keyword>
<feature type="chain" id="PRO_1000008072" description="DNA mismatch repair protein MutS">
    <location>
        <begin position="1"/>
        <end position="848"/>
    </location>
</feature>
<feature type="binding site" evidence="1">
    <location>
        <begin position="605"/>
        <end position="612"/>
    </location>
    <ligand>
        <name>ATP</name>
        <dbReference type="ChEBI" id="CHEBI:30616"/>
    </ligand>
</feature>
<proteinExistence type="inferred from homology"/>
<sequence>MNLEITGTSAEYWSDLAEALNTPMMKQFLTIKKDFPDTILFFRMGDFYEMFLEDAKIASSILDIALTKRQNAVPMCGIPYHSKDNYISRLLNAGKKIAICEQSKPEETGSKLMTRDVVRIITPGTVIEENLLTGFQNNYLAVLHLKKSLIYFAMADFSTGELFYSSTPITSLEKLVAELEKFRPSEICVPQSELSFFQELEYFRDKEFTVLKDQPEIPEKDQFQILSRYLDEYIRETYRDNKLVLREPRILSSGKFLEMDRETILNLELVENGKEKNHTLYSIFNFCNTAKGKRLLKQRILFPECDPMVLYSRWEKQDILFKIVLAPFIAALRDVGDIERILTRFRGNHSYPRDFRSILNSISTGIKLKKELEALSYPFLIPLEELKVLSEFIEERLHPGDDLPVILGNGPFLKTGFSTRLDKAREAGFKGKDWILSLEAEEKKRTNLNTLKIRYNKIVGYFIEISRAQAEQAPKDYLKKQTLVGSERFTTPKLEEIERTILEADEIIQEIERAEFNRMVEEVLKYSSALLSFSEEIGDLDFQISVLIAKDKFGWIRPELSKDRSLNLVDSRHPVVEATLPPGQEFVPNSVYLDTQNQAIAVLTGPNMAGKSTFMRQIALNQILFQMGAFVPAKSARLPIVDKLFTRIGAGDNLTAGESTFYVEMKETANILNHYTEDSLILFDEVGRGTSTYDGMSIAWSILEYLSSLSVKPKTIFATHYHELTELSRLSGIFNLYLETLEKEDKVLFLRKVKVGKAKKSFGIYVAKIAGIPEPIVKRAAELLIDLESKKKEIRIQEAQPTLFIEPESKNLPSETEESILKLKLEEMTPMEALKKLEDFQKKLRKQK</sequence>
<comment type="function">
    <text evidence="1">This protein is involved in the repair of mismatches in DNA. It is possible that it carries out the mismatch recognition step. This protein has a weak ATPase activity.</text>
</comment>
<comment type="similarity">
    <text evidence="1">Belongs to the DNA mismatch repair MutS family.</text>
</comment>
<protein>
    <recommendedName>
        <fullName evidence="1">DNA mismatch repair protein MutS</fullName>
    </recommendedName>
</protein>
<dbReference type="EMBL" id="CP000348">
    <property type="protein sequence ID" value="ABJ78906.1"/>
    <property type="molecule type" value="Genomic_DNA"/>
</dbReference>
<dbReference type="RefSeq" id="WP_011670112.1">
    <property type="nucleotide sequence ID" value="NC_008508.1"/>
</dbReference>
<dbReference type="SMR" id="Q051T9"/>
<dbReference type="KEGG" id="lbl:LBL_1417"/>
<dbReference type="PATRIC" id="fig|355276.3.peg.1789"/>
<dbReference type="HOGENOM" id="CLU_002472_3_1_12"/>
<dbReference type="GO" id="GO:0005829">
    <property type="term" value="C:cytosol"/>
    <property type="evidence" value="ECO:0007669"/>
    <property type="project" value="TreeGrafter"/>
</dbReference>
<dbReference type="GO" id="GO:0005524">
    <property type="term" value="F:ATP binding"/>
    <property type="evidence" value="ECO:0007669"/>
    <property type="project" value="UniProtKB-UniRule"/>
</dbReference>
<dbReference type="GO" id="GO:0140664">
    <property type="term" value="F:ATP-dependent DNA damage sensor activity"/>
    <property type="evidence" value="ECO:0007669"/>
    <property type="project" value="InterPro"/>
</dbReference>
<dbReference type="GO" id="GO:0003684">
    <property type="term" value="F:damaged DNA binding"/>
    <property type="evidence" value="ECO:0007669"/>
    <property type="project" value="UniProtKB-UniRule"/>
</dbReference>
<dbReference type="GO" id="GO:0030983">
    <property type="term" value="F:mismatched DNA binding"/>
    <property type="evidence" value="ECO:0007669"/>
    <property type="project" value="InterPro"/>
</dbReference>
<dbReference type="GO" id="GO:0006298">
    <property type="term" value="P:mismatch repair"/>
    <property type="evidence" value="ECO:0007669"/>
    <property type="project" value="UniProtKB-UniRule"/>
</dbReference>
<dbReference type="FunFam" id="3.40.1170.10:FF:000001">
    <property type="entry name" value="DNA mismatch repair protein MutS"/>
    <property type="match status" value="1"/>
</dbReference>
<dbReference type="FunFam" id="3.40.50.300:FF:001974">
    <property type="entry name" value="DNA mismatch repair protein MutS"/>
    <property type="match status" value="1"/>
</dbReference>
<dbReference type="Gene3D" id="1.10.1420.10">
    <property type="match status" value="2"/>
</dbReference>
<dbReference type="Gene3D" id="3.40.1170.10">
    <property type="entry name" value="DNA repair protein MutS, domain I"/>
    <property type="match status" value="1"/>
</dbReference>
<dbReference type="Gene3D" id="3.30.420.110">
    <property type="entry name" value="MutS, connector domain"/>
    <property type="match status" value="1"/>
</dbReference>
<dbReference type="Gene3D" id="3.40.50.300">
    <property type="entry name" value="P-loop containing nucleotide triphosphate hydrolases"/>
    <property type="match status" value="1"/>
</dbReference>
<dbReference type="HAMAP" id="MF_00096">
    <property type="entry name" value="MutS"/>
    <property type="match status" value="1"/>
</dbReference>
<dbReference type="InterPro" id="IPR005748">
    <property type="entry name" value="DNA_mismatch_repair_MutS"/>
</dbReference>
<dbReference type="InterPro" id="IPR007695">
    <property type="entry name" value="DNA_mismatch_repair_MutS-lik_N"/>
</dbReference>
<dbReference type="InterPro" id="IPR017261">
    <property type="entry name" value="DNA_mismatch_repair_MutS/MSH"/>
</dbReference>
<dbReference type="InterPro" id="IPR000432">
    <property type="entry name" value="DNA_mismatch_repair_MutS_C"/>
</dbReference>
<dbReference type="InterPro" id="IPR007861">
    <property type="entry name" value="DNA_mismatch_repair_MutS_clamp"/>
</dbReference>
<dbReference type="InterPro" id="IPR007696">
    <property type="entry name" value="DNA_mismatch_repair_MutS_core"/>
</dbReference>
<dbReference type="InterPro" id="IPR016151">
    <property type="entry name" value="DNA_mismatch_repair_MutS_N"/>
</dbReference>
<dbReference type="InterPro" id="IPR036187">
    <property type="entry name" value="DNA_mismatch_repair_MutS_sf"/>
</dbReference>
<dbReference type="InterPro" id="IPR007860">
    <property type="entry name" value="DNA_mmatch_repair_MutS_con_dom"/>
</dbReference>
<dbReference type="InterPro" id="IPR045076">
    <property type="entry name" value="MutS"/>
</dbReference>
<dbReference type="InterPro" id="IPR036678">
    <property type="entry name" value="MutS_con_dom_sf"/>
</dbReference>
<dbReference type="InterPro" id="IPR027417">
    <property type="entry name" value="P-loop_NTPase"/>
</dbReference>
<dbReference type="NCBIfam" id="TIGR01070">
    <property type="entry name" value="mutS1"/>
    <property type="match status" value="1"/>
</dbReference>
<dbReference type="NCBIfam" id="NF003810">
    <property type="entry name" value="PRK05399.1"/>
    <property type="match status" value="1"/>
</dbReference>
<dbReference type="PANTHER" id="PTHR11361:SF34">
    <property type="entry name" value="DNA MISMATCH REPAIR PROTEIN MSH1, MITOCHONDRIAL"/>
    <property type="match status" value="1"/>
</dbReference>
<dbReference type="PANTHER" id="PTHR11361">
    <property type="entry name" value="DNA MISMATCH REPAIR PROTEIN MUTS FAMILY MEMBER"/>
    <property type="match status" value="1"/>
</dbReference>
<dbReference type="Pfam" id="PF01624">
    <property type="entry name" value="MutS_I"/>
    <property type="match status" value="1"/>
</dbReference>
<dbReference type="Pfam" id="PF05188">
    <property type="entry name" value="MutS_II"/>
    <property type="match status" value="1"/>
</dbReference>
<dbReference type="Pfam" id="PF05192">
    <property type="entry name" value="MutS_III"/>
    <property type="match status" value="1"/>
</dbReference>
<dbReference type="Pfam" id="PF05190">
    <property type="entry name" value="MutS_IV"/>
    <property type="match status" value="1"/>
</dbReference>
<dbReference type="Pfam" id="PF00488">
    <property type="entry name" value="MutS_V"/>
    <property type="match status" value="1"/>
</dbReference>
<dbReference type="PIRSF" id="PIRSF037677">
    <property type="entry name" value="DNA_mis_repair_Msh6"/>
    <property type="match status" value="1"/>
</dbReference>
<dbReference type="SMART" id="SM00534">
    <property type="entry name" value="MUTSac"/>
    <property type="match status" value="1"/>
</dbReference>
<dbReference type="SMART" id="SM00533">
    <property type="entry name" value="MUTSd"/>
    <property type="match status" value="1"/>
</dbReference>
<dbReference type="SUPFAM" id="SSF55271">
    <property type="entry name" value="DNA repair protein MutS, domain I"/>
    <property type="match status" value="1"/>
</dbReference>
<dbReference type="SUPFAM" id="SSF53150">
    <property type="entry name" value="DNA repair protein MutS, domain II"/>
    <property type="match status" value="1"/>
</dbReference>
<dbReference type="SUPFAM" id="SSF48334">
    <property type="entry name" value="DNA repair protein MutS, domain III"/>
    <property type="match status" value="1"/>
</dbReference>
<dbReference type="SUPFAM" id="SSF52540">
    <property type="entry name" value="P-loop containing nucleoside triphosphate hydrolases"/>
    <property type="match status" value="1"/>
</dbReference>
<dbReference type="PROSITE" id="PS00486">
    <property type="entry name" value="DNA_MISMATCH_REPAIR_2"/>
    <property type="match status" value="1"/>
</dbReference>
<organism>
    <name type="scientific">Leptospira borgpetersenii serovar Hardjo-bovis (strain L550)</name>
    <dbReference type="NCBI Taxonomy" id="355276"/>
    <lineage>
        <taxon>Bacteria</taxon>
        <taxon>Pseudomonadati</taxon>
        <taxon>Spirochaetota</taxon>
        <taxon>Spirochaetia</taxon>
        <taxon>Leptospirales</taxon>
        <taxon>Leptospiraceae</taxon>
        <taxon>Leptospira</taxon>
    </lineage>
</organism>